<protein>
    <recommendedName>
        <fullName evidence="1">Small ribosomal subunit protein bS21</fullName>
    </recommendedName>
    <alternativeName>
        <fullName evidence="3">30S ribosomal protein S21</fullName>
    </alternativeName>
</protein>
<sequence>MSEIKVGENESLESALRRFKRKCARAGVLSEVRKREHYEKPSVKRKKKSEAARKRKFK</sequence>
<accession>Q97JJ2</accession>
<proteinExistence type="inferred from homology"/>
<gene>
    <name evidence="1" type="primary">rpsU</name>
    <name type="ordered locus">CA_C1288</name>
</gene>
<reference key="1">
    <citation type="journal article" date="2001" name="J. Bacteriol.">
        <title>Genome sequence and comparative analysis of the solvent-producing bacterium Clostridium acetobutylicum.</title>
        <authorList>
            <person name="Noelling J."/>
            <person name="Breton G."/>
            <person name="Omelchenko M.V."/>
            <person name="Makarova K.S."/>
            <person name="Zeng Q."/>
            <person name="Gibson R."/>
            <person name="Lee H.M."/>
            <person name="Dubois J."/>
            <person name="Qiu D."/>
            <person name="Hitti J."/>
            <person name="Wolf Y.I."/>
            <person name="Tatusov R.L."/>
            <person name="Sabathe F."/>
            <person name="Doucette-Stamm L.A."/>
            <person name="Soucaille P."/>
            <person name="Daly M.J."/>
            <person name="Bennett G.N."/>
            <person name="Koonin E.V."/>
            <person name="Smith D.R."/>
        </authorList>
    </citation>
    <scope>NUCLEOTIDE SEQUENCE [LARGE SCALE GENOMIC DNA]</scope>
    <source>
        <strain>ATCC 824 / DSM 792 / JCM 1419 / IAM 19013 / LMG 5710 / NBRC 13948 / NRRL B-527 / VKM B-1787 / 2291 / W</strain>
    </source>
</reference>
<feature type="chain" id="PRO_0000178328" description="Small ribosomal subunit protein bS21">
    <location>
        <begin position="1"/>
        <end position="58"/>
    </location>
</feature>
<feature type="region of interest" description="Disordered" evidence="2">
    <location>
        <begin position="34"/>
        <end position="58"/>
    </location>
</feature>
<feature type="compositionally biased region" description="Basic residues" evidence="2">
    <location>
        <begin position="43"/>
        <end position="58"/>
    </location>
</feature>
<comment type="similarity">
    <text evidence="1">Belongs to the bacterial ribosomal protein bS21 family.</text>
</comment>
<name>RS21_CLOAB</name>
<evidence type="ECO:0000255" key="1">
    <source>
        <dbReference type="HAMAP-Rule" id="MF_00358"/>
    </source>
</evidence>
<evidence type="ECO:0000256" key="2">
    <source>
        <dbReference type="SAM" id="MobiDB-lite"/>
    </source>
</evidence>
<evidence type="ECO:0000305" key="3"/>
<organism>
    <name type="scientific">Clostridium acetobutylicum (strain ATCC 824 / DSM 792 / JCM 1419 / IAM 19013 / LMG 5710 / NBRC 13948 / NRRL B-527 / VKM B-1787 / 2291 / W)</name>
    <dbReference type="NCBI Taxonomy" id="272562"/>
    <lineage>
        <taxon>Bacteria</taxon>
        <taxon>Bacillati</taxon>
        <taxon>Bacillota</taxon>
        <taxon>Clostridia</taxon>
        <taxon>Eubacteriales</taxon>
        <taxon>Clostridiaceae</taxon>
        <taxon>Clostridium</taxon>
    </lineage>
</organism>
<keyword id="KW-1185">Reference proteome</keyword>
<keyword id="KW-0687">Ribonucleoprotein</keyword>
<keyword id="KW-0689">Ribosomal protein</keyword>
<dbReference type="EMBL" id="AE001437">
    <property type="protein sequence ID" value="AAK79259.1"/>
    <property type="molecule type" value="Genomic_DNA"/>
</dbReference>
<dbReference type="PIR" id="H97058">
    <property type="entry name" value="H97058"/>
</dbReference>
<dbReference type="RefSeq" id="NP_347919.1">
    <property type="nucleotide sequence ID" value="NC_003030.1"/>
</dbReference>
<dbReference type="RefSeq" id="WP_010964600.1">
    <property type="nucleotide sequence ID" value="NC_003030.1"/>
</dbReference>
<dbReference type="SMR" id="Q97JJ2"/>
<dbReference type="STRING" id="272562.CA_C1288"/>
<dbReference type="GeneID" id="44997794"/>
<dbReference type="KEGG" id="cac:CA_C1288"/>
<dbReference type="PATRIC" id="fig|272562.8.peg.1489"/>
<dbReference type="eggNOG" id="COG0828">
    <property type="taxonomic scope" value="Bacteria"/>
</dbReference>
<dbReference type="HOGENOM" id="CLU_159258_1_2_9"/>
<dbReference type="OrthoDB" id="9799244at2"/>
<dbReference type="Proteomes" id="UP000000814">
    <property type="component" value="Chromosome"/>
</dbReference>
<dbReference type="GO" id="GO:1990904">
    <property type="term" value="C:ribonucleoprotein complex"/>
    <property type="evidence" value="ECO:0007669"/>
    <property type="project" value="UniProtKB-KW"/>
</dbReference>
<dbReference type="GO" id="GO:0005840">
    <property type="term" value="C:ribosome"/>
    <property type="evidence" value="ECO:0007669"/>
    <property type="project" value="UniProtKB-KW"/>
</dbReference>
<dbReference type="GO" id="GO:0003735">
    <property type="term" value="F:structural constituent of ribosome"/>
    <property type="evidence" value="ECO:0007669"/>
    <property type="project" value="InterPro"/>
</dbReference>
<dbReference type="GO" id="GO:0006412">
    <property type="term" value="P:translation"/>
    <property type="evidence" value="ECO:0007669"/>
    <property type="project" value="UniProtKB-UniRule"/>
</dbReference>
<dbReference type="Gene3D" id="1.20.5.1150">
    <property type="entry name" value="Ribosomal protein S8"/>
    <property type="match status" value="1"/>
</dbReference>
<dbReference type="HAMAP" id="MF_00358">
    <property type="entry name" value="Ribosomal_bS21"/>
    <property type="match status" value="1"/>
</dbReference>
<dbReference type="InterPro" id="IPR001911">
    <property type="entry name" value="Ribosomal_bS21"/>
</dbReference>
<dbReference type="InterPro" id="IPR018278">
    <property type="entry name" value="Ribosomal_bS21_CS"/>
</dbReference>
<dbReference type="InterPro" id="IPR038380">
    <property type="entry name" value="Ribosomal_bS21_sf"/>
</dbReference>
<dbReference type="NCBIfam" id="TIGR00030">
    <property type="entry name" value="S21p"/>
    <property type="match status" value="1"/>
</dbReference>
<dbReference type="PANTHER" id="PTHR21109">
    <property type="entry name" value="MITOCHONDRIAL 28S RIBOSOMAL PROTEIN S21"/>
    <property type="match status" value="1"/>
</dbReference>
<dbReference type="PANTHER" id="PTHR21109:SF22">
    <property type="entry name" value="SMALL RIBOSOMAL SUBUNIT PROTEIN BS21"/>
    <property type="match status" value="1"/>
</dbReference>
<dbReference type="Pfam" id="PF01165">
    <property type="entry name" value="Ribosomal_S21"/>
    <property type="match status" value="1"/>
</dbReference>
<dbReference type="PRINTS" id="PR00976">
    <property type="entry name" value="RIBOSOMALS21"/>
</dbReference>
<dbReference type="PROSITE" id="PS01181">
    <property type="entry name" value="RIBOSOMAL_S21"/>
    <property type="match status" value="1"/>
</dbReference>